<name>MALQ_HAEIN</name>
<comment type="catalytic activity">
    <reaction>
        <text>Transfers a segment of a (1-&gt;4)-alpha-D-glucan to a new position in an acceptor, which may be glucose or a (1-&gt;4)-alpha-D-glucan.</text>
        <dbReference type="EC" id="2.4.1.25"/>
    </reaction>
</comment>
<comment type="subcellular location">
    <subcellularLocation>
        <location evidence="1">Cytoplasm</location>
    </subcellularLocation>
</comment>
<comment type="similarity">
    <text evidence="2">Belongs to the disproportionating enzyme family.</text>
</comment>
<proteinExistence type="inferred from homology"/>
<protein>
    <recommendedName>
        <fullName>4-alpha-glucanotransferase</fullName>
        <ecNumber>2.4.1.25</ecNumber>
    </recommendedName>
    <alternativeName>
        <fullName>Amylomaltase</fullName>
    </alternativeName>
    <alternativeName>
        <fullName>Disproportionating enzyme</fullName>
        <shortName>D-enzyme</shortName>
    </alternativeName>
</protein>
<organism>
    <name type="scientific">Haemophilus influenzae (strain ATCC 51907 / DSM 11121 / KW20 / Rd)</name>
    <dbReference type="NCBI Taxonomy" id="71421"/>
    <lineage>
        <taxon>Bacteria</taxon>
        <taxon>Pseudomonadati</taxon>
        <taxon>Pseudomonadota</taxon>
        <taxon>Gammaproteobacteria</taxon>
        <taxon>Pasteurellales</taxon>
        <taxon>Pasteurellaceae</taxon>
        <taxon>Haemophilus</taxon>
    </lineage>
</organism>
<reference key="1">
    <citation type="journal article" date="1995" name="Science">
        <title>Whole-genome random sequencing and assembly of Haemophilus influenzae Rd.</title>
        <authorList>
            <person name="Fleischmann R.D."/>
            <person name="Adams M.D."/>
            <person name="White O."/>
            <person name="Clayton R.A."/>
            <person name="Kirkness E.F."/>
            <person name="Kerlavage A.R."/>
            <person name="Bult C.J."/>
            <person name="Tomb J.-F."/>
            <person name="Dougherty B.A."/>
            <person name="Merrick J.M."/>
            <person name="McKenney K."/>
            <person name="Sutton G.G."/>
            <person name="FitzHugh W."/>
            <person name="Fields C.A."/>
            <person name="Gocayne J.D."/>
            <person name="Scott J.D."/>
            <person name="Shirley R."/>
            <person name="Liu L.-I."/>
            <person name="Glodek A."/>
            <person name="Kelley J.M."/>
            <person name="Weidman J.F."/>
            <person name="Phillips C.A."/>
            <person name="Spriggs T."/>
            <person name="Hedblom E."/>
            <person name="Cotton M.D."/>
            <person name="Utterback T.R."/>
            <person name="Hanna M.C."/>
            <person name="Nguyen D.T."/>
            <person name="Saudek D.M."/>
            <person name="Brandon R.C."/>
            <person name="Fine L.D."/>
            <person name="Fritchman J.L."/>
            <person name="Fuhrmann J.L."/>
            <person name="Geoghagen N.S.M."/>
            <person name="Gnehm C.L."/>
            <person name="McDonald L.A."/>
            <person name="Small K.V."/>
            <person name="Fraser C.M."/>
            <person name="Smith H.O."/>
            <person name="Venter J.C."/>
        </authorList>
    </citation>
    <scope>NUCLEOTIDE SEQUENCE [LARGE SCALE GENOMIC DNA]</scope>
    <source>
        <strain>ATCC 51907 / DSM 11121 / KW20 / Rd</strain>
    </source>
</reference>
<keyword id="KW-0119">Carbohydrate metabolism</keyword>
<keyword id="KW-0963">Cytoplasm</keyword>
<keyword id="KW-0328">Glycosyltransferase</keyword>
<keyword id="KW-1185">Reference proteome</keyword>
<keyword id="KW-0808">Transferase</keyword>
<evidence type="ECO:0000250" key="1"/>
<evidence type="ECO:0000305" key="2"/>
<sequence length="699" mass="80252">MVSMQISDSLKQKAEKCGIALSHYDIDGHLIFADEKTVSTFVELLQPPPKAKGQFDDVLAAFENEPIDYRLNRLDLPPSAEYRYQLTDESNAILLEKILSNLSVLSLPPLPFGYYQLSIFSDTEQYRIRLLISPKTAFQPPVLENKKVWGVNVQLYSLRSEQNWGIGDFGDLAYLIEQSAKQGADYVGINPLHLPYPAVPNWASPYSSSSRRWLNFLYLDIPDLPEFKRCRSVQNWFKREDIQAKIAALRESDCVDYSSILALKLTALEPLFDFFQRSQSVEIVTRRKIFAEYLKNKGEPLLLQGLFNVLDLQEHADHQAEENTIGWLGWRKEWQHLSAAKRKALLKTHHEKIQFFAWLQWLTEEQLSALQNLCKQSGMKLGIYGDLAVNSSRGSADVWSDPDLYCVNASIGAPPDPLGPVGQNWNLPPYNPTVLKARGFAPFIDMLCANMQYFGVLRIDHVMGLFRLWWIPKGKTAADGAYVHYPFDELMAILAIESVRNECLIIGEDLGTVPDEVRWKLNEFQIFSYFVLYFAQRNGEFPRISDYPRNAYATIGTHDVPSLQSFWHCRDLELFNQLGILNGEVLKQKYDQRVMDKQALLNSLHRDNYLPPHYEGDALSMAMHDYLNRMIHYYLAESNSRLIGVQLENLLSQEISFNLPSTSNEYPNWCKKLAQPLAFIFSNEALKTFFVQINQGRNV</sequence>
<feature type="chain" id="PRO_0000170126" description="4-alpha-glucanotransferase">
    <location>
        <begin position="1"/>
        <end position="699"/>
    </location>
</feature>
<dbReference type="EC" id="2.4.1.25"/>
<dbReference type="EMBL" id="L42023">
    <property type="protein sequence ID" value="AAC23003.1"/>
    <property type="molecule type" value="Genomic_DNA"/>
</dbReference>
<dbReference type="PIR" id="H64118">
    <property type="entry name" value="H64118"/>
</dbReference>
<dbReference type="RefSeq" id="NP_439507.1">
    <property type="nucleotide sequence ID" value="NC_000907.1"/>
</dbReference>
<dbReference type="SMR" id="P45176"/>
<dbReference type="STRING" id="71421.HI_1356"/>
<dbReference type="CAZy" id="GH77">
    <property type="family name" value="Glycoside Hydrolase Family 77"/>
</dbReference>
<dbReference type="EnsemblBacteria" id="AAC23003">
    <property type="protein sequence ID" value="AAC23003"/>
    <property type="gene ID" value="HI_1356"/>
</dbReference>
<dbReference type="KEGG" id="hin:HI_1356"/>
<dbReference type="PATRIC" id="fig|71421.8.peg.1409"/>
<dbReference type="eggNOG" id="COG1640">
    <property type="taxonomic scope" value="Bacteria"/>
</dbReference>
<dbReference type="HOGENOM" id="CLU_022072_1_1_6"/>
<dbReference type="OrthoDB" id="9763489at2"/>
<dbReference type="PhylomeDB" id="P45176"/>
<dbReference type="BioCyc" id="HINF71421:G1GJ1-1381-MONOMER"/>
<dbReference type="Proteomes" id="UP000000579">
    <property type="component" value="Chromosome"/>
</dbReference>
<dbReference type="GO" id="GO:0005737">
    <property type="term" value="C:cytoplasm"/>
    <property type="evidence" value="ECO:0007669"/>
    <property type="project" value="UniProtKB-SubCell"/>
</dbReference>
<dbReference type="GO" id="GO:0004134">
    <property type="term" value="F:4-alpha-glucanotransferase activity"/>
    <property type="evidence" value="ECO:0007669"/>
    <property type="project" value="UniProtKB-EC"/>
</dbReference>
<dbReference type="GO" id="GO:0005975">
    <property type="term" value="P:carbohydrate metabolic process"/>
    <property type="evidence" value="ECO:0007669"/>
    <property type="project" value="InterPro"/>
</dbReference>
<dbReference type="Gene3D" id="3.20.20.80">
    <property type="entry name" value="Glycosidases"/>
    <property type="match status" value="1"/>
</dbReference>
<dbReference type="InterPro" id="IPR003385">
    <property type="entry name" value="Glyco_hydro_77"/>
</dbReference>
<dbReference type="InterPro" id="IPR017853">
    <property type="entry name" value="Glycoside_hydrolase_SF"/>
</dbReference>
<dbReference type="NCBIfam" id="TIGR00217">
    <property type="entry name" value="malQ"/>
    <property type="match status" value="1"/>
</dbReference>
<dbReference type="PANTHER" id="PTHR32438">
    <property type="entry name" value="4-ALPHA-GLUCANOTRANSFERASE DPE1, CHLOROPLASTIC/AMYLOPLASTIC"/>
    <property type="match status" value="1"/>
</dbReference>
<dbReference type="PANTHER" id="PTHR32438:SF5">
    <property type="entry name" value="4-ALPHA-GLUCANOTRANSFERASE DPE1, CHLOROPLASTIC_AMYLOPLASTIC"/>
    <property type="match status" value="1"/>
</dbReference>
<dbReference type="Pfam" id="PF02446">
    <property type="entry name" value="Glyco_hydro_77"/>
    <property type="match status" value="1"/>
</dbReference>
<dbReference type="SUPFAM" id="SSF51445">
    <property type="entry name" value="(Trans)glycosidases"/>
    <property type="match status" value="1"/>
</dbReference>
<accession>P45176</accession>
<gene>
    <name type="primary">malQ</name>
    <name type="ordered locus">HI_1356</name>
</gene>